<evidence type="ECO:0000255" key="1">
    <source>
        <dbReference type="HAMAP-Rule" id="MF_01517"/>
    </source>
</evidence>
<dbReference type="EC" id="1.1.1.37" evidence="1"/>
<dbReference type="EMBL" id="CP000615">
    <property type="protein sequence ID" value="ABO56749.1"/>
    <property type="molecule type" value="Genomic_DNA"/>
</dbReference>
<dbReference type="SMR" id="A4JKE6"/>
<dbReference type="KEGG" id="bvi:Bcep1808_3766"/>
<dbReference type="eggNOG" id="COG0039">
    <property type="taxonomic scope" value="Bacteria"/>
</dbReference>
<dbReference type="HOGENOM" id="CLU_040727_2_0_4"/>
<dbReference type="Proteomes" id="UP000002287">
    <property type="component" value="Chromosome 2"/>
</dbReference>
<dbReference type="GO" id="GO:0030060">
    <property type="term" value="F:L-malate dehydrogenase (NAD+) activity"/>
    <property type="evidence" value="ECO:0007669"/>
    <property type="project" value="UniProtKB-UniRule"/>
</dbReference>
<dbReference type="GO" id="GO:0006108">
    <property type="term" value="P:malate metabolic process"/>
    <property type="evidence" value="ECO:0007669"/>
    <property type="project" value="InterPro"/>
</dbReference>
<dbReference type="GO" id="GO:0006099">
    <property type="term" value="P:tricarboxylic acid cycle"/>
    <property type="evidence" value="ECO:0007669"/>
    <property type="project" value="UniProtKB-UniRule"/>
</dbReference>
<dbReference type="CDD" id="cd01338">
    <property type="entry name" value="MDH_chloroplast-like"/>
    <property type="match status" value="1"/>
</dbReference>
<dbReference type="FunFam" id="3.40.50.720:FF:000010">
    <property type="entry name" value="Malate dehydrogenase"/>
    <property type="match status" value="1"/>
</dbReference>
<dbReference type="FunFam" id="3.90.110.10:FF:000002">
    <property type="entry name" value="Malate dehydrogenase"/>
    <property type="match status" value="1"/>
</dbReference>
<dbReference type="Gene3D" id="3.90.110.10">
    <property type="entry name" value="Lactate dehydrogenase/glycoside hydrolase, family 4, C-terminal"/>
    <property type="match status" value="1"/>
</dbReference>
<dbReference type="Gene3D" id="3.40.50.720">
    <property type="entry name" value="NAD(P)-binding Rossmann-like Domain"/>
    <property type="match status" value="1"/>
</dbReference>
<dbReference type="HAMAP" id="MF_01517">
    <property type="entry name" value="Malate_dehydrog_2"/>
    <property type="match status" value="1"/>
</dbReference>
<dbReference type="InterPro" id="IPR001557">
    <property type="entry name" value="L-lactate/malate_DH"/>
</dbReference>
<dbReference type="InterPro" id="IPR022383">
    <property type="entry name" value="Lactate/malate_DH_C"/>
</dbReference>
<dbReference type="InterPro" id="IPR001236">
    <property type="entry name" value="Lactate/malate_DH_N"/>
</dbReference>
<dbReference type="InterPro" id="IPR015955">
    <property type="entry name" value="Lactate_DH/Glyco_Ohase_4_C"/>
</dbReference>
<dbReference type="InterPro" id="IPR010945">
    <property type="entry name" value="Malate_DH_type2"/>
</dbReference>
<dbReference type="InterPro" id="IPR036291">
    <property type="entry name" value="NAD(P)-bd_dom_sf"/>
</dbReference>
<dbReference type="NCBIfam" id="TIGR01759">
    <property type="entry name" value="MalateDH-SF1"/>
    <property type="match status" value="1"/>
</dbReference>
<dbReference type="NCBIfam" id="NF003916">
    <property type="entry name" value="PRK05442.1"/>
    <property type="match status" value="1"/>
</dbReference>
<dbReference type="PANTHER" id="PTHR23382">
    <property type="entry name" value="MALATE DEHYDROGENASE"/>
    <property type="match status" value="1"/>
</dbReference>
<dbReference type="Pfam" id="PF02866">
    <property type="entry name" value="Ldh_1_C"/>
    <property type="match status" value="1"/>
</dbReference>
<dbReference type="Pfam" id="PF00056">
    <property type="entry name" value="Ldh_1_N"/>
    <property type="match status" value="1"/>
</dbReference>
<dbReference type="PIRSF" id="PIRSF000102">
    <property type="entry name" value="Lac_mal_DH"/>
    <property type="match status" value="1"/>
</dbReference>
<dbReference type="SUPFAM" id="SSF56327">
    <property type="entry name" value="LDH C-terminal domain-like"/>
    <property type="match status" value="1"/>
</dbReference>
<dbReference type="SUPFAM" id="SSF51735">
    <property type="entry name" value="NAD(P)-binding Rossmann-fold domains"/>
    <property type="match status" value="1"/>
</dbReference>
<organism>
    <name type="scientific">Burkholderia vietnamiensis (strain G4 / LMG 22486)</name>
    <name type="common">Burkholderia cepacia (strain R1808)</name>
    <dbReference type="NCBI Taxonomy" id="269482"/>
    <lineage>
        <taxon>Bacteria</taxon>
        <taxon>Pseudomonadati</taxon>
        <taxon>Pseudomonadota</taxon>
        <taxon>Betaproteobacteria</taxon>
        <taxon>Burkholderiales</taxon>
        <taxon>Burkholderiaceae</taxon>
        <taxon>Burkholderia</taxon>
        <taxon>Burkholderia cepacia complex</taxon>
    </lineage>
</organism>
<accession>A4JKE6</accession>
<sequence length="328" mass="35654">MSKPARRVAVTGAAGQIAYSLLFRIARGDLLGDDQPVILQLLELPHALDALRGVVMELEDCAFPLLQSVEISDDPRVAFRDADYAMLVGSRPRGKGMERRDLLAANAAIFRSQGEALNEVANRQVKVLVVGNPANTNAWVARHYAPDLPADAITAMIRLDHNRAVSKLAARCGVTVDAVSRMAVWGNHSPTMFPDYRHALIDQQPAPMRVGDERWYLDTFIPEVARRGTAIIEARGASSAASAANAAIDQMRDWIRGSGGRWVSMSIVSGGEYGIPRGLMFGMPTICSEGRYRVVPDLEIDALARARIDASVAELVDEMQAVRAILAL</sequence>
<name>MDH1_BURVG</name>
<gene>
    <name evidence="1" type="primary">mdh1</name>
    <name type="ordered locus">Bcep1808_3766</name>
</gene>
<proteinExistence type="inferred from homology"/>
<protein>
    <recommendedName>
        <fullName evidence="1">Malate dehydrogenase 1</fullName>
        <ecNumber evidence="1">1.1.1.37</ecNumber>
    </recommendedName>
</protein>
<comment type="function">
    <text evidence="1">Catalyzes the reversible oxidation of malate to oxaloacetate.</text>
</comment>
<comment type="catalytic activity">
    <reaction evidence="1">
        <text>(S)-malate + NAD(+) = oxaloacetate + NADH + H(+)</text>
        <dbReference type="Rhea" id="RHEA:21432"/>
        <dbReference type="ChEBI" id="CHEBI:15378"/>
        <dbReference type="ChEBI" id="CHEBI:15589"/>
        <dbReference type="ChEBI" id="CHEBI:16452"/>
        <dbReference type="ChEBI" id="CHEBI:57540"/>
        <dbReference type="ChEBI" id="CHEBI:57945"/>
        <dbReference type="EC" id="1.1.1.37"/>
    </reaction>
</comment>
<comment type="similarity">
    <text evidence="1">Belongs to the LDH/MDH superfamily. MDH type 2 family.</text>
</comment>
<reference key="1">
    <citation type="submission" date="2007-03" db="EMBL/GenBank/DDBJ databases">
        <title>Complete sequence of chromosome 2 of Burkholderia vietnamiensis G4.</title>
        <authorList>
            <consortium name="US DOE Joint Genome Institute"/>
            <person name="Copeland A."/>
            <person name="Lucas S."/>
            <person name="Lapidus A."/>
            <person name="Barry K."/>
            <person name="Detter J.C."/>
            <person name="Glavina del Rio T."/>
            <person name="Hammon N."/>
            <person name="Israni S."/>
            <person name="Dalin E."/>
            <person name="Tice H."/>
            <person name="Pitluck S."/>
            <person name="Chain P."/>
            <person name="Malfatti S."/>
            <person name="Shin M."/>
            <person name="Vergez L."/>
            <person name="Schmutz J."/>
            <person name="Larimer F."/>
            <person name="Land M."/>
            <person name="Hauser L."/>
            <person name="Kyrpides N."/>
            <person name="Tiedje J."/>
            <person name="Richardson P."/>
        </authorList>
    </citation>
    <scope>NUCLEOTIDE SEQUENCE [LARGE SCALE GENOMIC DNA]</scope>
    <source>
        <strain>G4 / LMG 22486</strain>
    </source>
</reference>
<keyword id="KW-0520">NAD</keyword>
<keyword id="KW-0560">Oxidoreductase</keyword>
<keyword id="KW-0816">Tricarboxylic acid cycle</keyword>
<feature type="chain" id="PRO_0000315545" description="Malate dehydrogenase 1">
    <location>
        <begin position="1"/>
        <end position="328"/>
    </location>
</feature>
<feature type="active site" description="Proton acceptor" evidence="1">
    <location>
        <position position="188"/>
    </location>
</feature>
<feature type="binding site" evidence="1">
    <location>
        <begin position="12"/>
        <end position="18"/>
    </location>
    <ligand>
        <name>NAD(+)</name>
        <dbReference type="ChEBI" id="CHEBI:57540"/>
    </ligand>
</feature>
<feature type="binding site" evidence="1">
    <location>
        <position position="93"/>
    </location>
    <ligand>
        <name>substrate</name>
    </ligand>
</feature>
<feature type="binding site" evidence="1">
    <location>
        <position position="99"/>
    </location>
    <ligand>
        <name>substrate</name>
    </ligand>
</feature>
<feature type="binding site" evidence="1">
    <location>
        <position position="106"/>
    </location>
    <ligand>
        <name>NAD(+)</name>
        <dbReference type="ChEBI" id="CHEBI:57540"/>
    </ligand>
</feature>
<feature type="binding site" evidence="1">
    <location>
        <position position="113"/>
    </location>
    <ligand>
        <name>NAD(+)</name>
        <dbReference type="ChEBI" id="CHEBI:57540"/>
    </ligand>
</feature>
<feature type="binding site" evidence="1">
    <location>
        <begin position="130"/>
        <end position="132"/>
    </location>
    <ligand>
        <name>NAD(+)</name>
        <dbReference type="ChEBI" id="CHEBI:57540"/>
    </ligand>
</feature>
<feature type="binding site" evidence="1">
    <location>
        <position position="132"/>
    </location>
    <ligand>
        <name>substrate</name>
    </ligand>
</feature>
<feature type="binding site" evidence="1">
    <location>
        <position position="163"/>
    </location>
    <ligand>
        <name>substrate</name>
    </ligand>
</feature>